<sequence>MNVAGLIVGLGNPGKEYERTRHNLGFMAVDALMEAAARETGGGCDQLSGGKKKYDLWRCRITPTGDPWLVAKPQTFMNLSGEAVLAIASYYRIKPDAILVVHDELDIPLGRMKFKTGGGNAGHNGLKSITQLLGTPDFHRLRLGIGRSPHGGETTNWVLGRLSGPEQTLLDTLLPAAVQAMTIFASQGAAAATQFANAYKPD</sequence>
<evidence type="ECO:0000255" key="1">
    <source>
        <dbReference type="HAMAP-Rule" id="MF_00083"/>
    </source>
</evidence>
<proteinExistence type="inferred from homology"/>
<feature type="chain" id="PRO_1000192964" description="Peptidyl-tRNA hydrolase">
    <location>
        <begin position="1"/>
        <end position="202"/>
    </location>
</feature>
<feature type="active site" description="Proton acceptor" evidence="1">
    <location>
        <position position="22"/>
    </location>
</feature>
<feature type="binding site" evidence="1">
    <location>
        <position position="17"/>
    </location>
    <ligand>
        <name>tRNA</name>
        <dbReference type="ChEBI" id="CHEBI:17843"/>
    </ligand>
</feature>
<feature type="binding site" evidence="1">
    <location>
        <position position="76"/>
    </location>
    <ligand>
        <name>tRNA</name>
        <dbReference type="ChEBI" id="CHEBI:17843"/>
    </ligand>
</feature>
<feature type="binding site" evidence="1">
    <location>
        <position position="78"/>
    </location>
    <ligand>
        <name>tRNA</name>
        <dbReference type="ChEBI" id="CHEBI:17843"/>
    </ligand>
</feature>
<feature type="binding site" evidence="1">
    <location>
        <position position="124"/>
    </location>
    <ligand>
        <name>tRNA</name>
        <dbReference type="ChEBI" id="CHEBI:17843"/>
    </ligand>
</feature>
<feature type="site" description="Discriminates between blocked and unblocked aminoacyl-tRNA" evidence="1">
    <location>
        <position position="12"/>
    </location>
</feature>
<feature type="site" description="Stabilizes the basic form of H active site to accept a proton" evidence="1">
    <location>
        <position position="103"/>
    </location>
</feature>
<dbReference type="EC" id="3.1.1.29" evidence="1"/>
<dbReference type="EMBL" id="CP001197">
    <property type="protein sequence ID" value="ACL07446.1"/>
    <property type="molecule type" value="Genomic_DNA"/>
</dbReference>
<dbReference type="SMR" id="B8DKL7"/>
<dbReference type="STRING" id="883.DvMF_0489"/>
<dbReference type="KEGG" id="dvm:DvMF_0489"/>
<dbReference type="eggNOG" id="COG0193">
    <property type="taxonomic scope" value="Bacteria"/>
</dbReference>
<dbReference type="HOGENOM" id="CLU_062456_3_1_7"/>
<dbReference type="OrthoDB" id="9800507at2"/>
<dbReference type="GO" id="GO:0005737">
    <property type="term" value="C:cytoplasm"/>
    <property type="evidence" value="ECO:0007669"/>
    <property type="project" value="UniProtKB-SubCell"/>
</dbReference>
<dbReference type="GO" id="GO:0004045">
    <property type="term" value="F:peptidyl-tRNA hydrolase activity"/>
    <property type="evidence" value="ECO:0007669"/>
    <property type="project" value="UniProtKB-UniRule"/>
</dbReference>
<dbReference type="GO" id="GO:0000049">
    <property type="term" value="F:tRNA binding"/>
    <property type="evidence" value="ECO:0007669"/>
    <property type="project" value="UniProtKB-UniRule"/>
</dbReference>
<dbReference type="GO" id="GO:0006515">
    <property type="term" value="P:protein quality control for misfolded or incompletely synthesized proteins"/>
    <property type="evidence" value="ECO:0007669"/>
    <property type="project" value="UniProtKB-UniRule"/>
</dbReference>
<dbReference type="GO" id="GO:0072344">
    <property type="term" value="P:rescue of stalled ribosome"/>
    <property type="evidence" value="ECO:0007669"/>
    <property type="project" value="UniProtKB-UniRule"/>
</dbReference>
<dbReference type="CDD" id="cd00462">
    <property type="entry name" value="PTH"/>
    <property type="match status" value="1"/>
</dbReference>
<dbReference type="FunFam" id="3.40.50.1470:FF:000001">
    <property type="entry name" value="Peptidyl-tRNA hydrolase"/>
    <property type="match status" value="1"/>
</dbReference>
<dbReference type="Gene3D" id="3.40.50.1470">
    <property type="entry name" value="Peptidyl-tRNA hydrolase"/>
    <property type="match status" value="1"/>
</dbReference>
<dbReference type="HAMAP" id="MF_00083">
    <property type="entry name" value="Pept_tRNA_hydro_bact"/>
    <property type="match status" value="1"/>
</dbReference>
<dbReference type="InterPro" id="IPR001328">
    <property type="entry name" value="Pept_tRNA_hydro"/>
</dbReference>
<dbReference type="InterPro" id="IPR018171">
    <property type="entry name" value="Pept_tRNA_hydro_CS"/>
</dbReference>
<dbReference type="InterPro" id="IPR036416">
    <property type="entry name" value="Pept_tRNA_hydro_sf"/>
</dbReference>
<dbReference type="NCBIfam" id="TIGR00447">
    <property type="entry name" value="pth"/>
    <property type="match status" value="1"/>
</dbReference>
<dbReference type="PANTHER" id="PTHR17224">
    <property type="entry name" value="PEPTIDYL-TRNA HYDROLASE"/>
    <property type="match status" value="1"/>
</dbReference>
<dbReference type="PANTHER" id="PTHR17224:SF1">
    <property type="entry name" value="PEPTIDYL-TRNA HYDROLASE"/>
    <property type="match status" value="1"/>
</dbReference>
<dbReference type="Pfam" id="PF01195">
    <property type="entry name" value="Pept_tRNA_hydro"/>
    <property type="match status" value="1"/>
</dbReference>
<dbReference type="SUPFAM" id="SSF53178">
    <property type="entry name" value="Peptidyl-tRNA hydrolase-like"/>
    <property type="match status" value="1"/>
</dbReference>
<dbReference type="PROSITE" id="PS01195">
    <property type="entry name" value="PEPT_TRNA_HYDROL_1"/>
    <property type="match status" value="1"/>
</dbReference>
<dbReference type="PROSITE" id="PS01196">
    <property type="entry name" value="PEPT_TRNA_HYDROL_2"/>
    <property type="match status" value="1"/>
</dbReference>
<name>PTH_NITV9</name>
<gene>
    <name evidence="1" type="primary">pth</name>
    <name type="ordered locus">DvMF_0489</name>
</gene>
<reference key="1">
    <citation type="submission" date="2008-10" db="EMBL/GenBank/DDBJ databases">
        <title>Complete sequence of Desulfovibrio vulgaris str. 'Miyazaki F'.</title>
        <authorList>
            <person name="Lucas S."/>
            <person name="Copeland A."/>
            <person name="Lapidus A."/>
            <person name="Glavina del Rio T."/>
            <person name="Dalin E."/>
            <person name="Tice H."/>
            <person name="Bruce D."/>
            <person name="Goodwin L."/>
            <person name="Pitluck S."/>
            <person name="Sims D."/>
            <person name="Brettin T."/>
            <person name="Detter J.C."/>
            <person name="Han C."/>
            <person name="Larimer F."/>
            <person name="Land M."/>
            <person name="Hauser L."/>
            <person name="Kyrpides N."/>
            <person name="Mikhailova N."/>
            <person name="Hazen T.C."/>
            <person name="Richardson P."/>
        </authorList>
    </citation>
    <scope>NUCLEOTIDE SEQUENCE [LARGE SCALE GENOMIC DNA]</scope>
    <source>
        <strain>DSM 19637 / Miyazaki F</strain>
    </source>
</reference>
<keyword id="KW-0963">Cytoplasm</keyword>
<keyword id="KW-0378">Hydrolase</keyword>
<keyword id="KW-0694">RNA-binding</keyword>
<keyword id="KW-0820">tRNA-binding</keyword>
<organism>
    <name type="scientific">Nitratidesulfovibrio vulgaris (strain DSM 19637 / Miyazaki F)</name>
    <name type="common">Desulfovibrio vulgaris</name>
    <dbReference type="NCBI Taxonomy" id="883"/>
    <lineage>
        <taxon>Bacteria</taxon>
        <taxon>Pseudomonadati</taxon>
        <taxon>Thermodesulfobacteriota</taxon>
        <taxon>Desulfovibrionia</taxon>
        <taxon>Desulfovibrionales</taxon>
        <taxon>Desulfovibrionaceae</taxon>
        <taxon>Nitratidesulfovibrio</taxon>
    </lineage>
</organism>
<comment type="function">
    <text evidence="1">Hydrolyzes ribosome-free peptidyl-tRNAs (with 1 or more amino acids incorporated), which drop off the ribosome during protein synthesis, or as a result of ribosome stalling.</text>
</comment>
<comment type="function">
    <text evidence="1">Catalyzes the release of premature peptidyl moieties from peptidyl-tRNA molecules trapped in stalled 50S ribosomal subunits, and thus maintains levels of free tRNAs and 50S ribosomes.</text>
</comment>
<comment type="catalytic activity">
    <reaction evidence="1">
        <text>an N-acyl-L-alpha-aminoacyl-tRNA + H2O = an N-acyl-L-amino acid + a tRNA + H(+)</text>
        <dbReference type="Rhea" id="RHEA:54448"/>
        <dbReference type="Rhea" id="RHEA-COMP:10123"/>
        <dbReference type="Rhea" id="RHEA-COMP:13883"/>
        <dbReference type="ChEBI" id="CHEBI:15377"/>
        <dbReference type="ChEBI" id="CHEBI:15378"/>
        <dbReference type="ChEBI" id="CHEBI:59874"/>
        <dbReference type="ChEBI" id="CHEBI:78442"/>
        <dbReference type="ChEBI" id="CHEBI:138191"/>
        <dbReference type="EC" id="3.1.1.29"/>
    </reaction>
</comment>
<comment type="subunit">
    <text evidence="1">Monomer.</text>
</comment>
<comment type="subcellular location">
    <subcellularLocation>
        <location evidence="1">Cytoplasm</location>
    </subcellularLocation>
</comment>
<comment type="similarity">
    <text evidence="1">Belongs to the PTH family.</text>
</comment>
<accession>B8DKL7</accession>
<protein>
    <recommendedName>
        <fullName evidence="1">Peptidyl-tRNA hydrolase</fullName>
        <shortName evidence="1">Pth</shortName>
        <ecNumber evidence="1">3.1.1.29</ecNumber>
    </recommendedName>
</protein>